<dbReference type="EC" id="1.1.1.37" evidence="1"/>
<dbReference type="EMBL" id="AY773261">
    <property type="protein sequence ID" value="AAV41054.1"/>
    <property type="molecule type" value="Genomic_DNA"/>
</dbReference>
<dbReference type="EMBL" id="CP000746">
    <property type="protein sequence ID" value="ABR74966.1"/>
    <property type="molecule type" value="Genomic_DNA"/>
</dbReference>
<dbReference type="RefSeq" id="WP_012073343.1">
    <property type="nucleotide sequence ID" value="NC_009655.1"/>
</dbReference>
<dbReference type="SMR" id="Q5U907"/>
<dbReference type="STRING" id="339671.Asuc_1612"/>
<dbReference type="KEGG" id="asu:Asuc_1612"/>
<dbReference type="eggNOG" id="COG0039">
    <property type="taxonomic scope" value="Bacteria"/>
</dbReference>
<dbReference type="HOGENOM" id="CLU_047181_0_1_6"/>
<dbReference type="OrthoDB" id="9802969at2"/>
<dbReference type="Proteomes" id="UP000001114">
    <property type="component" value="Chromosome"/>
</dbReference>
<dbReference type="GO" id="GO:0005737">
    <property type="term" value="C:cytoplasm"/>
    <property type="evidence" value="ECO:0007669"/>
    <property type="project" value="TreeGrafter"/>
</dbReference>
<dbReference type="GO" id="GO:0030060">
    <property type="term" value="F:L-malate dehydrogenase (NAD+) activity"/>
    <property type="evidence" value="ECO:0007669"/>
    <property type="project" value="UniProtKB-UniRule"/>
</dbReference>
<dbReference type="GO" id="GO:0006108">
    <property type="term" value="P:malate metabolic process"/>
    <property type="evidence" value="ECO:0007669"/>
    <property type="project" value="InterPro"/>
</dbReference>
<dbReference type="GO" id="GO:0006099">
    <property type="term" value="P:tricarboxylic acid cycle"/>
    <property type="evidence" value="ECO:0007669"/>
    <property type="project" value="UniProtKB-UniRule"/>
</dbReference>
<dbReference type="CDD" id="cd01337">
    <property type="entry name" value="MDH_glyoxysomal_mitochondrial"/>
    <property type="match status" value="1"/>
</dbReference>
<dbReference type="FunFam" id="3.40.50.720:FF:000017">
    <property type="entry name" value="Malate dehydrogenase"/>
    <property type="match status" value="1"/>
</dbReference>
<dbReference type="FunFam" id="3.90.110.10:FF:000001">
    <property type="entry name" value="Malate dehydrogenase"/>
    <property type="match status" value="1"/>
</dbReference>
<dbReference type="Gene3D" id="3.90.110.10">
    <property type="entry name" value="Lactate dehydrogenase/glycoside hydrolase, family 4, C-terminal"/>
    <property type="match status" value="1"/>
</dbReference>
<dbReference type="Gene3D" id="3.40.50.720">
    <property type="entry name" value="NAD(P)-binding Rossmann-like Domain"/>
    <property type="match status" value="1"/>
</dbReference>
<dbReference type="HAMAP" id="MF_01516">
    <property type="entry name" value="Malate_dehydrog_1"/>
    <property type="match status" value="1"/>
</dbReference>
<dbReference type="InterPro" id="IPR001557">
    <property type="entry name" value="L-lactate/malate_DH"/>
</dbReference>
<dbReference type="InterPro" id="IPR022383">
    <property type="entry name" value="Lactate/malate_DH_C"/>
</dbReference>
<dbReference type="InterPro" id="IPR001236">
    <property type="entry name" value="Lactate/malate_DH_N"/>
</dbReference>
<dbReference type="InterPro" id="IPR015955">
    <property type="entry name" value="Lactate_DH/Glyco_Ohase_4_C"/>
</dbReference>
<dbReference type="InterPro" id="IPR001252">
    <property type="entry name" value="Malate_DH_AS"/>
</dbReference>
<dbReference type="InterPro" id="IPR010097">
    <property type="entry name" value="Malate_DH_type1"/>
</dbReference>
<dbReference type="InterPro" id="IPR023958">
    <property type="entry name" value="Malate_DH_type1_bac"/>
</dbReference>
<dbReference type="InterPro" id="IPR036291">
    <property type="entry name" value="NAD(P)-bd_dom_sf"/>
</dbReference>
<dbReference type="NCBIfam" id="TIGR01772">
    <property type="entry name" value="MDH_euk_gproteo"/>
    <property type="match status" value="1"/>
</dbReference>
<dbReference type="PANTHER" id="PTHR11540">
    <property type="entry name" value="MALATE AND LACTATE DEHYDROGENASE"/>
    <property type="match status" value="1"/>
</dbReference>
<dbReference type="PANTHER" id="PTHR11540:SF16">
    <property type="entry name" value="MALATE DEHYDROGENASE, MITOCHONDRIAL"/>
    <property type="match status" value="1"/>
</dbReference>
<dbReference type="Pfam" id="PF02866">
    <property type="entry name" value="Ldh_1_C"/>
    <property type="match status" value="1"/>
</dbReference>
<dbReference type="Pfam" id="PF00056">
    <property type="entry name" value="Ldh_1_N"/>
    <property type="match status" value="1"/>
</dbReference>
<dbReference type="PIRSF" id="PIRSF000102">
    <property type="entry name" value="Lac_mal_DH"/>
    <property type="match status" value="1"/>
</dbReference>
<dbReference type="SUPFAM" id="SSF56327">
    <property type="entry name" value="LDH C-terminal domain-like"/>
    <property type="match status" value="1"/>
</dbReference>
<dbReference type="SUPFAM" id="SSF51735">
    <property type="entry name" value="NAD(P)-binding Rossmann-fold domains"/>
    <property type="match status" value="1"/>
</dbReference>
<dbReference type="PROSITE" id="PS00068">
    <property type="entry name" value="MDH"/>
    <property type="match status" value="1"/>
</dbReference>
<feature type="chain" id="PRO_0000113299" description="Malate dehydrogenase">
    <location>
        <begin position="1"/>
        <end position="312"/>
    </location>
</feature>
<feature type="active site" description="Proton acceptor" evidence="1">
    <location>
        <position position="177"/>
    </location>
</feature>
<feature type="binding site" evidence="1">
    <location>
        <begin position="7"/>
        <end position="13"/>
    </location>
    <ligand>
        <name>NAD(+)</name>
        <dbReference type="ChEBI" id="CHEBI:57540"/>
    </ligand>
</feature>
<feature type="binding site" evidence="1">
    <location>
        <position position="34"/>
    </location>
    <ligand>
        <name>NAD(+)</name>
        <dbReference type="ChEBI" id="CHEBI:57540"/>
    </ligand>
</feature>
<feature type="binding site" evidence="1">
    <location>
        <position position="81"/>
    </location>
    <ligand>
        <name>substrate</name>
    </ligand>
</feature>
<feature type="binding site" evidence="1">
    <location>
        <position position="87"/>
    </location>
    <ligand>
        <name>substrate</name>
    </ligand>
</feature>
<feature type="binding site" evidence="1">
    <location>
        <position position="94"/>
    </location>
    <ligand>
        <name>NAD(+)</name>
        <dbReference type="ChEBI" id="CHEBI:57540"/>
    </ligand>
</feature>
<feature type="binding site" evidence="1">
    <location>
        <begin position="117"/>
        <end position="119"/>
    </location>
    <ligand>
        <name>NAD(+)</name>
        <dbReference type="ChEBI" id="CHEBI:57540"/>
    </ligand>
</feature>
<feature type="binding site" evidence="1">
    <location>
        <position position="119"/>
    </location>
    <ligand>
        <name>substrate</name>
    </ligand>
</feature>
<feature type="binding site" evidence="1">
    <location>
        <position position="153"/>
    </location>
    <ligand>
        <name>substrate</name>
    </ligand>
</feature>
<feature type="binding site" evidence="1">
    <location>
        <position position="227"/>
    </location>
    <ligand>
        <name>NAD(+)</name>
        <dbReference type="ChEBI" id="CHEBI:57540"/>
    </ligand>
</feature>
<comment type="function">
    <text evidence="1">Catalyzes the reversible oxidation of malate to oxaloacetate.</text>
</comment>
<comment type="catalytic activity">
    <reaction evidence="1">
        <text>(S)-malate + NAD(+) = oxaloacetate + NADH + H(+)</text>
        <dbReference type="Rhea" id="RHEA:21432"/>
        <dbReference type="ChEBI" id="CHEBI:15378"/>
        <dbReference type="ChEBI" id="CHEBI:15589"/>
        <dbReference type="ChEBI" id="CHEBI:16452"/>
        <dbReference type="ChEBI" id="CHEBI:57540"/>
        <dbReference type="ChEBI" id="CHEBI:57945"/>
        <dbReference type="EC" id="1.1.1.37"/>
    </reaction>
</comment>
<comment type="subunit">
    <text evidence="1">Homodimer.</text>
</comment>
<comment type="similarity">
    <text evidence="1">Belongs to the LDH/MDH superfamily. MDH type 1 family.</text>
</comment>
<organism>
    <name type="scientific">Actinobacillus succinogenes (strain ATCC 55618 / DSM 22257 / CCUG 43843 / 130Z)</name>
    <dbReference type="NCBI Taxonomy" id="339671"/>
    <lineage>
        <taxon>Bacteria</taxon>
        <taxon>Pseudomonadati</taxon>
        <taxon>Pseudomonadota</taxon>
        <taxon>Gammaproteobacteria</taxon>
        <taxon>Pasteurellales</taxon>
        <taxon>Pasteurellaceae</taxon>
        <taxon>Actinobacillus</taxon>
    </lineage>
</organism>
<proteinExistence type="inferred from homology"/>
<evidence type="ECO:0000255" key="1">
    <source>
        <dbReference type="HAMAP-Rule" id="MF_01516"/>
    </source>
</evidence>
<protein>
    <recommendedName>
        <fullName evidence="1">Malate dehydrogenase</fullName>
        <ecNumber evidence="1">1.1.1.37</ecNumber>
    </recommendedName>
</protein>
<reference key="1">
    <citation type="submission" date="2004-10" db="EMBL/GenBank/DDBJ databases">
        <title>Actinobacillus succinogenes mdh gene cloning and recombinant enzyme characterization.</title>
        <authorList>
            <person name="Laivenieks M."/>
            <person name="Vieille C."/>
            <person name="Zeikus J.G."/>
        </authorList>
    </citation>
    <scope>NUCLEOTIDE SEQUENCE [GENOMIC DNA]</scope>
</reference>
<reference key="2">
    <citation type="journal article" date="2010" name="BMC Genomics">
        <title>A genomic perspective on the potential of Actinobacillus succinogenes for industrial succinate production.</title>
        <authorList>
            <person name="McKinlay J.B."/>
            <person name="Laivenieks M."/>
            <person name="Schindler B.D."/>
            <person name="McKinlay A.A."/>
            <person name="Siddaramappa S."/>
            <person name="Challacombe J.F."/>
            <person name="Lowry S.R."/>
            <person name="Clum A."/>
            <person name="Lapidus A.L."/>
            <person name="Burkhart K.B."/>
            <person name="Harkins V."/>
            <person name="Vieille C."/>
        </authorList>
    </citation>
    <scope>NUCLEOTIDE SEQUENCE [LARGE SCALE GENOMIC DNA]</scope>
    <source>
        <strain>ATCC 55618 / DSM 22257 / CCUG 43843 / 130Z</strain>
    </source>
</reference>
<name>MDH_ACTSZ</name>
<sequence length="312" mass="33115">MKVTLLGASGGIGQPLSLLLKLHLPAESDLSLYDVAPVTPGVAKDISHIPTSVEVEGFGGDDPSEALKGADIVLICAGVARKPGMTRADLFNVNAGIIQNLVEKVAQVCPQACVCIITNPVNSIIPIAAEVLKKAGVYDKRKLFGITTLDTIRSEKFIVQAKNIEINRNDISVIGGHSGVTILPLLSQIPHVEFTEQELKDLTHRIQNAGTEVVEAKAGAGSATLSMAYAAMRFVVSMARALNGEVITECAYIEGDGKFARFFAQPVRLGKNGVEEILPLGTLSAFEQQALEAMLPTLQTDIDNGVKFVTGE</sequence>
<accession>Q5U907</accession>
<accession>A6VPR9</accession>
<gene>
    <name evidence="1" type="primary">mdh</name>
    <name type="ordered locus">Asuc_1612</name>
</gene>
<keyword id="KW-0520">NAD</keyword>
<keyword id="KW-0560">Oxidoreductase</keyword>
<keyword id="KW-1185">Reference proteome</keyword>
<keyword id="KW-0816">Tricarboxylic acid cycle</keyword>